<feature type="chain" id="PRO_0000134506" description="Probable deoxyhypusine synthase">
    <location>
        <begin position="1"/>
        <end position="337"/>
    </location>
</feature>
<feature type="active site" description="Nucleophile" evidence="1">
    <location>
        <position position="308"/>
    </location>
</feature>
<organism>
    <name type="scientific">Thermococcus kodakarensis (strain ATCC BAA-918 / JCM 12380 / KOD1)</name>
    <name type="common">Pyrococcus kodakaraensis (strain KOD1)</name>
    <dbReference type="NCBI Taxonomy" id="69014"/>
    <lineage>
        <taxon>Archaea</taxon>
        <taxon>Methanobacteriati</taxon>
        <taxon>Methanobacteriota</taxon>
        <taxon>Thermococci</taxon>
        <taxon>Thermococcales</taxon>
        <taxon>Thermococcaceae</taxon>
        <taxon>Thermococcus</taxon>
    </lineage>
</organism>
<keyword id="KW-0386">Hypusine biosynthesis</keyword>
<keyword id="KW-0520">NAD</keyword>
<keyword id="KW-1185">Reference proteome</keyword>
<keyword id="KW-0808">Transferase</keyword>
<name>DHYS_THEKO</name>
<protein>
    <recommendedName>
        <fullName evidence="1">Probable deoxyhypusine synthase</fullName>
        <shortName evidence="1">DHS</shortName>
        <ecNumber evidence="1">2.5.1.46</ecNumber>
    </recommendedName>
</protein>
<accession>Q5JEY0</accession>
<proteinExistence type="inferred from homology"/>
<evidence type="ECO:0000255" key="1">
    <source>
        <dbReference type="HAMAP-Rule" id="MF_00153"/>
    </source>
</evidence>
<reference key="1">
    <citation type="journal article" date="2005" name="Genome Res.">
        <title>Complete genome sequence of the hyperthermophilic archaeon Thermococcus kodakaraensis KOD1 and comparison with Pyrococcus genomes.</title>
        <authorList>
            <person name="Fukui T."/>
            <person name="Atomi H."/>
            <person name="Kanai T."/>
            <person name="Matsumi R."/>
            <person name="Fujiwara S."/>
            <person name="Imanaka T."/>
        </authorList>
    </citation>
    <scope>NUCLEOTIDE SEQUENCE [LARGE SCALE GENOMIC DNA]</scope>
    <source>
        <strain>ATCC BAA-918 / JCM 12380 / KOD1</strain>
    </source>
</reference>
<sequence>MTEPKDIVLKESEEVEGIPIEGPWLDDVSSLEEVLDYYERIGFQATHLGKAIEIWKKVEKRRAEGKEVRVFLGYTSNIISSGLRELVAWLVKEGKIDVIVTTAGGIEEDFIKALKPFILGDWHVNDALMREKGINRIGNIFVPNDRYIEFEKYMIPFFERVLEIEKERGKPLTASEFIYELGRYMDEKLGKEKERSVIYWAYKRNVPIFCPAITDGSIGDMLYFFKEERGDRELIIDIANDIVKLNNLAVTAKETASIILGGSLPKHAIINANLFRGGTDYAIYITTAVPWDGSLSGAPPSEGVSWGKIRAKADYVEIWADATLVFPLLVWKVMKAP</sequence>
<comment type="function">
    <text evidence="1">Catalyzes the NAD-dependent oxidative cleavage of spermidine and the subsequent transfer of the butylamine moiety of spermidine to the epsilon-amino group of a specific lysine residue of the eIF-5A precursor protein to form the intermediate deoxyhypusine residue.</text>
</comment>
<comment type="catalytic activity">
    <reaction evidence="1">
        <text>[eIF5A protein]-L-lysine + spermidine = [eIF5A protein]-deoxyhypusine + propane-1,3-diamine</text>
        <dbReference type="Rhea" id="RHEA:33299"/>
        <dbReference type="Rhea" id="RHEA-COMP:10143"/>
        <dbReference type="Rhea" id="RHEA-COMP:10144"/>
        <dbReference type="ChEBI" id="CHEBI:29969"/>
        <dbReference type="ChEBI" id="CHEBI:57484"/>
        <dbReference type="ChEBI" id="CHEBI:57834"/>
        <dbReference type="ChEBI" id="CHEBI:82657"/>
        <dbReference type="EC" id="2.5.1.46"/>
    </reaction>
</comment>
<comment type="cofactor">
    <cofactor evidence="1">
        <name>NAD(+)</name>
        <dbReference type="ChEBI" id="CHEBI:57540"/>
    </cofactor>
</comment>
<comment type="pathway">
    <text evidence="1">Protein modification; eIF5A hypusination.</text>
</comment>
<comment type="similarity">
    <text evidence="1">Belongs to the deoxyhypusine synthase family.</text>
</comment>
<gene>
    <name evidence="1" type="primary">dys</name>
    <name type="ordered locus">TK0671</name>
</gene>
<dbReference type="EC" id="2.5.1.46" evidence="1"/>
<dbReference type="EMBL" id="AP006878">
    <property type="protein sequence ID" value="BAD84860.1"/>
    <property type="molecule type" value="Genomic_DNA"/>
</dbReference>
<dbReference type="RefSeq" id="WP_011249622.1">
    <property type="nucleotide sequence ID" value="NC_006624.1"/>
</dbReference>
<dbReference type="SMR" id="Q5JEY0"/>
<dbReference type="FunCoup" id="Q5JEY0">
    <property type="interactions" value="178"/>
</dbReference>
<dbReference type="STRING" id="69014.TK0671"/>
<dbReference type="EnsemblBacteria" id="BAD84860">
    <property type="protein sequence ID" value="BAD84860"/>
    <property type="gene ID" value="TK0671"/>
</dbReference>
<dbReference type="GeneID" id="78447185"/>
<dbReference type="KEGG" id="tko:TK0671"/>
<dbReference type="PATRIC" id="fig|69014.16.peg.652"/>
<dbReference type="eggNOG" id="arCOG04142">
    <property type="taxonomic scope" value="Archaea"/>
</dbReference>
<dbReference type="HOGENOM" id="CLU_039781_0_0_2"/>
<dbReference type="InParanoid" id="Q5JEY0"/>
<dbReference type="OrthoDB" id="17730at2157"/>
<dbReference type="PhylomeDB" id="Q5JEY0"/>
<dbReference type="UniPathway" id="UPA00354"/>
<dbReference type="Proteomes" id="UP000000536">
    <property type="component" value="Chromosome"/>
</dbReference>
<dbReference type="GO" id="GO:0005737">
    <property type="term" value="C:cytoplasm"/>
    <property type="evidence" value="ECO:0000318"/>
    <property type="project" value="GO_Central"/>
</dbReference>
<dbReference type="GO" id="GO:0034038">
    <property type="term" value="F:deoxyhypusine synthase activity"/>
    <property type="evidence" value="ECO:0000318"/>
    <property type="project" value="GO_Central"/>
</dbReference>
<dbReference type="GO" id="GO:0008216">
    <property type="term" value="P:spermidine metabolic process"/>
    <property type="evidence" value="ECO:0000318"/>
    <property type="project" value="GO_Central"/>
</dbReference>
<dbReference type="FunFam" id="3.40.910.10:FF:000004">
    <property type="entry name" value="Probable deoxyhypusine synthase"/>
    <property type="match status" value="1"/>
</dbReference>
<dbReference type="Gene3D" id="3.40.910.10">
    <property type="entry name" value="Deoxyhypusine synthase"/>
    <property type="match status" value="1"/>
</dbReference>
<dbReference type="HAMAP" id="MF_00153">
    <property type="entry name" value="DHS"/>
    <property type="match status" value="1"/>
</dbReference>
<dbReference type="InterPro" id="IPR022899">
    <property type="entry name" value="Deoxyhypus_synthase_arc"/>
</dbReference>
<dbReference type="InterPro" id="IPR002773">
    <property type="entry name" value="Deoxyhypusine_synthase"/>
</dbReference>
<dbReference type="InterPro" id="IPR036982">
    <property type="entry name" value="Deoxyhypusine_synthase_sf"/>
</dbReference>
<dbReference type="InterPro" id="IPR029035">
    <property type="entry name" value="DHS-like_NAD/FAD-binding_dom"/>
</dbReference>
<dbReference type="NCBIfam" id="TIGR00321">
    <property type="entry name" value="dhys"/>
    <property type="match status" value="1"/>
</dbReference>
<dbReference type="NCBIfam" id="NF003052">
    <property type="entry name" value="PRK03971.1"/>
    <property type="match status" value="1"/>
</dbReference>
<dbReference type="PANTHER" id="PTHR11703">
    <property type="entry name" value="DEOXYHYPUSINE SYNTHASE"/>
    <property type="match status" value="1"/>
</dbReference>
<dbReference type="PANTHER" id="PTHR11703:SF0">
    <property type="entry name" value="DEOXYHYPUSINE SYNTHASE"/>
    <property type="match status" value="1"/>
</dbReference>
<dbReference type="Pfam" id="PF01916">
    <property type="entry name" value="DS"/>
    <property type="match status" value="1"/>
</dbReference>
<dbReference type="SUPFAM" id="SSF52467">
    <property type="entry name" value="DHS-like NAD/FAD-binding domain"/>
    <property type="match status" value="1"/>
</dbReference>